<reference key="1">
    <citation type="journal article" date="1998" name="J. Bacteriol.">
        <title>Physical and genetic map of the obligate intracellular bacterium Coxiella burnetii.</title>
        <authorList>
            <person name="Willems H."/>
            <person name="Jaeger C."/>
            <person name="Baljer G."/>
        </authorList>
    </citation>
    <scope>NUCLEOTIDE SEQUENCE [GENOMIC DNA]</scope>
    <source>
        <strain>RSA 493 / Nine Mile phase I</strain>
    </source>
</reference>
<reference key="2">
    <citation type="journal article" date="2003" name="Proc. Natl. Acad. Sci. U.S.A.">
        <title>Complete genome sequence of the Q-fever pathogen, Coxiella burnetii.</title>
        <authorList>
            <person name="Seshadri R."/>
            <person name="Paulsen I.T."/>
            <person name="Eisen J.A."/>
            <person name="Read T.D."/>
            <person name="Nelson K.E."/>
            <person name="Nelson W.C."/>
            <person name="Ward N.L."/>
            <person name="Tettelin H."/>
            <person name="Davidsen T.M."/>
            <person name="Beanan M.J."/>
            <person name="DeBoy R.T."/>
            <person name="Daugherty S.C."/>
            <person name="Brinkac L.M."/>
            <person name="Madupu R."/>
            <person name="Dodson R.J."/>
            <person name="Khouri H.M."/>
            <person name="Lee K.H."/>
            <person name="Carty H.A."/>
            <person name="Scanlan D."/>
            <person name="Heinzen R.A."/>
            <person name="Thompson H.A."/>
            <person name="Samuel J.E."/>
            <person name="Fraser C.M."/>
            <person name="Heidelberg J.F."/>
        </authorList>
    </citation>
    <scope>NUCLEOTIDE SEQUENCE [LARGE SCALE GENOMIC DNA]</scope>
    <source>
        <strain>RSA 493 / Nine Mile phase I</strain>
    </source>
</reference>
<evidence type="ECO:0000255" key="1">
    <source>
        <dbReference type="HAMAP-Rule" id="MF_01331"/>
    </source>
</evidence>
<evidence type="ECO:0000305" key="2"/>
<organism>
    <name type="scientific">Coxiella burnetii (strain RSA 493 / Nine Mile phase I)</name>
    <dbReference type="NCBI Taxonomy" id="227377"/>
    <lineage>
        <taxon>Bacteria</taxon>
        <taxon>Pseudomonadati</taxon>
        <taxon>Pseudomonadota</taxon>
        <taxon>Gammaproteobacteria</taxon>
        <taxon>Legionellales</taxon>
        <taxon>Coxiellaceae</taxon>
        <taxon>Coxiella</taxon>
    </lineage>
</organism>
<comment type="function">
    <text evidence="1">This protein binds specifically to 23S rRNA; its binding is stimulated by other ribosomal proteins, e.g. L4, L17, and L20. It is important during the early stages of 50S assembly. It makes multiple contacts with different domains of the 23S rRNA in the assembled 50S subunit and ribosome (By similarity).</text>
</comment>
<comment type="function">
    <text evidence="1">The globular domain of the protein is located near the polypeptide exit tunnel on the outside of the subunit, while an extended beta-hairpin is found that lines the wall of the exit tunnel in the center of the 70S ribosome.</text>
</comment>
<comment type="subunit">
    <text evidence="1">Part of the 50S ribosomal subunit.</text>
</comment>
<comment type="similarity">
    <text evidence="1">Belongs to the universal ribosomal protein uL22 family.</text>
</comment>
<dbReference type="EMBL" id="AF064946">
    <property type="protein sequence ID" value="AAD09928.1"/>
    <property type="molecule type" value="Genomic_DNA"/>
</dbReference>
<dbReference type="EMBL" id="AE016828">
    <property type="protein sequence ID" value="AAO89801.1"/>
    <property type="molecule type" value="Genomic_DNA"/>
</dbReference>
<dbReference type="RefSeq" id="NP_819287.1">
    <property type="nucleotide sequence ID" value="NC_002971.4"/>
</dbReference>
<dbReference type="RefSeq" id="WP_010957457.1">
    <property type="nucleotide sequence ID" value="NZ_CCYB01000060.1"/>
</dbReference>
<dbReference type="SMR" id="O85387"/>
<dbReference type="STRING" id="227377.CBU_0243"/>
<dbReference type="DNASU" id="1208124"/>
<dbReference type="EnsemblBacteria" id="AAO89801">
    <property type="protein sequence ID" value="AAO89801"/>
    <property type="gene ID" value="CBU_0243"/>
</dbReference>
<dbReference type="GeneID" id="1208124"/>
<dbReference type="KEGG" id="cbu:CBU_0243"/>
<dbReference type="PATRIC" id="fig|227377.7.peg.238"/>
<dbReference type="eggNOG" id="COG0091">
    <property type="taxonomic scope" value="Bacteria"/>
</dbReference>
<dbReference type="HOGENOM" id="CLU_083987_3_3_6"/>
<dbReference type="OrthoDB" id="9805969at2"/>
<dbReference type="Proteomes" id="UP000002671">
    <property type="component" value="Chromosome"/>
</dbReference>
<dbReference type="GO" id="GO:0022625">
    <property type="term" value="C:cytosolic large ribosomal subunit"/>
    <property type="evidence" value="ECO:0000318"/>
    <property type="project" value="GO_Central"/>
</dbReference>
<dbReference type="GO" id="GO:0019843">
    <property type="term" value="F:rRNA binding"/>
    <property type="evidence" value="ECO:0007669"/>
    <property type="project" value="UniProtKB-UniRule"/>
</dbReference>
<dbReference type="GO" id="GO:0003735">
    <property type="term" value="F:structural constituent of ribosome"/>
    <property type="evidence" value="ECO:0000318"/>
    <property type="project" value="GO_Central"/>
</dbReference>
<dbReference type="GO" id="GO:0006412">
    <property type="term" value="P:translation"/>
    <property type="evidence" value="ECO:0000318"/>
    <property type="project" value="GO_Central"/>
</dbReference>
<dbReference type="CDD" id="cd00336">
    <property type="entry name" value="Ribosomal_L22"/>
    <property type="match status" value="1"/>
</dbReference>
<dbReference type="FunFam" id="3.90.470.10:FF:000001">
    <property type="entry name" value="50S ribosomal protein L22"/>
    <property type="match status" value="1"/>
</dbReference>
<dbReference type="Gene3D" id="3.90.470.10">
    <property type="entry name" value="Ribosomal protein L22/L17"/>
    <property type="match status" value="1"/>
</dbReference>
<dbReference type="HAMAP" id="MF_01331_B">
    <property type="entry name" value="Ribosomal_uL22_B"/>
    <property type="match status" value="1"/>
</dbReference>
<dbReference type="InterPro" id="IPR001063">
    <property type="entry name" value="Ribosomal_uL22"/>
</dbReference>
<dbReference type="InterPro" id="IPR005727">
    <property type="entry name" value="Ribosomal_uL22_bac/chlpt-type"/>
</dbReference>
<dbReference type="InterPro" id="IPR047867">
    <property type="entry name" value="Ribosomal_uL22_bac/org-type"/>
</dbReference>
<dbReference type="InterPro" id="IPR018260">
    <property type="entry name" value="Ribosomal_uL22_CS"/>
</dbReference>
<dbReference type="InterPro" id="IPR036394">
    <property type="entry name" value="Ribosomal_uL22_sf"/>
</dbReference>
<dbReference type="NCBIfam" id="TIGR01044">
    <property type="entry name" value="rplV_bact"/>
    <property type="match status" value="1"/>
</dbReference>
<dbReference type="PANTHER" id="PTHR13501">
    <property type="entry name" value="CHLOROPLAST 50S RIBOSOMAL PROTEIN L22-RELATED"/>
    <property type="match status" value="1"/>
</dbReference>
<dbReference type="PANTHER" id="PTHR13501:SF8">
    <property type="entry name" value="LARGE RIBOSOMAL SUBUNIT PROTEIN UL22M"/>
    <property type="match status" value="1"/>
</dbReference>
<dbReference type="Pfam" id="PF00237">
    <property type="entry name" value="Ribosomal_L22"/>
    <property type="match status" value="1"/>
</dbReference>
<dbReference type="SUPFAM" id="SSF54843">
    <property type="entry name" value="Ribosomal protein L22"/>
    <property type="match status" value="1"/>
</dbReference>
<dbReference type="PROSITE" id="PS00464">
    <property type="entry name" value="RIBOSOMAL_L22"/>
    <property type="match status" value="1"/>
</dbReference>
<keyword id="KW-1185">Reference proteome</keyword>
<keyword id="KW-0687">Ribonucleoprotein</keyword>
<keyword id="KW-0689">Ribosomal protein</keyword>
<keyword id="KW-0694">RNA-binding</keyword>
<keyword id="KW-0699">rRNA-binding</keyword>
<gene>
    <name evidence="1" type="primary">rplV</name>
    <name type="ordered locus">CBU_0243</name>
</gene>
<sequence>MEVAAKLKYARISAQKARLVADQVRGLGAEQAVNLLRFSNKKAAALMKKVLDSAIANAEHNEGADIDELKVSTVMVDEGPSARRFHARARGRANQILKRTCHITVKVSDSQVEND</sequence>
<proteinExistence type="inferred from homology"/>
<name>RL22_COXBU</name>
<protein>
    <recommendedName>
        <fullName evidence="1">Large ribosomal subunit protein uL22</fullName>
    </recommendedName>
    <alternativeName>
        <fullName evidence="2">50S ribosomal protein L22</fullName>
    </alternativeName>
</protein>
<accession>O85387</accession>
<feature type="chain" id="PRO_0000125150" description="Large ribosomal subunit protein uL22">
    <location>
        <begin position="1"/>
        <end position="115"/>
    </location>
</feature>